<evidence type="ECO:0000255" key="1"/>
<evidence type="ECO:0000269" key="2">
    <source>
    </source>
</evidence>
<evidence type="ECO:0000269" key="3">
    <source>
    </source>
</evidence>
<evidence type="ECO:0000269" key="4">
    <source>
    </source>
</evidence>
<evidence type="ECO:0000305" key="5"/>
<sequence length="526" mass="58352">MNSASFLQSRLISRSFLVRRSLKRYSGLAKPYTFQQPTIYALSTPANQTSAIAIIRISGTHAKYIYNRLVDSSTVPPIRKAILRNIYSPSSCSVKPHDQKESKILLDTSLLLYFQAPYSFTGEDVLELHVHGGKAVVNSILKAIGSLHDRSSGKDIRFALPGDFSRRAFQNGKFDLTQLEGIKDLIDSETESQRRSALSSFNGDNKILFENWRETIIENMAQLTAIIDFADDNSQEIQNTDEIFHNVEKNIICLRDQIVTFMQKVEKSTILQNGIKLVLLGAPNVGKSSLVNSLTNDDISIVSDIPGTTRDSIDAMINVNGYKVIICDTAGIREKSSDKIEMLGIDRAKKKSVQSDLCLFIVDPTDLSKLLPEDILAHLSSKTFGNKRIIIVVNKSDLVSDDEMTKVLNKLQTRLGSKYPILSVSCKTKEGIESLISTLTSNFESLSQSSADASPVIVSKRVSEILKNDVLYGLEEFFKSKDFHNDIVLATENLRYASDGIAKITGQAIGIEEILDSVFSKFCIGK</sequence>
<keyword id="KW-0342">GTP-binding</keyword>
<keyword id="KW-0496">Mitochondrion</keyword>
<keyword id="KW-0547">Nucleotide-binding</keyword>
<keyword id="KW-1185">Reference proteome</keyword>
<keyword id="KW-0809">Transit peptide</keyword>
<keyword id="KW-0819">tRNA processing</keyword>
<comment type="function">
    <text evidence="4">GTPase involved in the 5-carboxymethylaminomethyl modification (mnm(5)s(2)U34) of the wobble uridine base in mitochondrial tRNAs. Involved in the expression of cytochrome c oxidase subunit 1 (COX1). Works in association with the small subunit of mitoribosomes.</text>
</comment>
<comment type="subunit">
    <text>Forms a heterodimer with MTO1.</text>
</comment>
<comment type="subcellular location">
    <subcellularLocation>
        <location evidence="2">Mitochondrion</location>
    </subcellularLocation>
</comment>
<comment type="miscellaneous">
    <text evidence="3">Present with 768 molecules/cell in log phase SD medium.</text>
</comment>
<comment type="similarity">
    <text evidence="5">Belongs to the TRAFAC class TrmE-Era-EngA-EngB-Septin-like GTPase superfamily. TrmE GTPase family.</text>
</comment>
<name>MSS1_YEAST</name>
<feature type="transit peptide" description="Mitochondrion" evidence="1">
    <location>
        <begin position="1"/>
        <end position="19"/>
    </location>
</feature>
<feature type="chain" id="PRO_0000035781" description="tRNA modification GTPase MSS1, mitochondrial">
    <location>
        <begin position="20"/>
        <end position="526"/>
    </location>
</feature>
<feature type="domain" description="TrmE-type G">
    <location>
        <begin position="274"/>
        <end position="444"/>
    </location>
</feature>
<feature type="binding site" evidence="1">
    <location>
        <begin position="281"/>
        <end position="288"/>
    </location>
    <ligand>
        <name>GTP</name>
        <dbReference type="ChEBI" id="CHEBI:37565"/>
    </ligand>
</feature>
<feature type="binding site" evidence="1">
    <location>
        <begin position="328"/>
        <end position="332"/>
    </location>
    <ligand>
        <name>GTP</name>
        <dbReference type="ChEBI" id="CHEBI:37565"/>
    </ligand>
</feature>
<feature type="binding site" evidence="1">
    <location>
        <begin position="394"/>
        <end position="397"/>
    </location>
    <ligand>
        <name>GTP</name>
        <dbReference type="ChEBI" id="CHEBI:37565"/>
    </ligand>
</feature>
<feature type="sequence conflict" description="In Ref. 1; CAA49238." evidence="5" ref="1">
    <original>A</original>
    <variation>R</variation>
    <location>
        <position position="53"/>
    </location>
</feature>
<accession>P32559</accession>
<accession>D6VZJ7</accession>
<accession>Q0PHA7</accession>
<gene>
    <name type="primary">MSS1</name>
    <name type="synonym">PET53</name>
    <name type="ordered locus">YMR023C</name>
    <name type="ORF">YM9711.13C</name>
</gene>
<protein>
    <recommendedName>
        <fullName>tRNA modification GTPase MSS1, mitochondrial</fullName>
    </recommendedName>
</protein>
<reference key="1">
    <citation type="journal article" date="1993" name="J. Mol. Biol.">
        <title>MSS1, a nuclear-encoded mitochondrial GTPase involved in the expression of COX1 subunit of cytochrome c oxidase.</title>
        <authorList>
            <person name="Decoster E."/>
            <person name="Vassal A."/>
            <person name="Faye G."/>
        </authorList>
    </citation>
    <scope>NUCLEOTIDE SEQUENCE [GENOMIC DNA]</scope>
</reference>
<reference key="2">
    <citation type="submission" date="2006-06" db="EMBL/GenBank/DDBJ databases">
        <title>MSS1, a mitochondrial GTP-binding protein involved in mitochondrial tRNA modification.</title>
        <authorList>
            <person name="Li X."/>
            <person name="Wang X."/>
            <person name="Guan M.-X."/>
        </authorList>
    </citation>
    <scope>NUCLEOTIDE SEQUENCE [GENOMIC DNA]</scope>
</reference>
<reference key="3">
    <citation type="journal article" date="1997" name="Nature">
        <title>The nucleotide sequence of Saccharomyces cerevisiae chromosome XIII.</title>
        <authorList>
            <person name="Bowman S."/>
            <person name="Churcher C.M."/>
            <person name="Badcock K."/>
            <person name="Brown D."/>
            <person name="Chillingworth T."/>
            <person name="Connor R."/>
            <person name="Dedman K."/>
            <person name="Devlin K."/>
            <person name="Gentles S."/>
            <person name="Hamlin N."/>
            <person name="Hunt S."/>
            <person name="Jagels K."/>
            <person name="Lye G."/>
            <person name="Moule S."/>
            <person name="Odell C."/>
            <person name="Pearson D."/>
            <person name="Rajandream M.A."/>
            <person name="Rice P."/>
            <person name="Skelton J."/>
            <person name="Walsh S.V."/>
            <person name="Whitehead S."/>
            <person name="Barrell B.G."/>
        </authorList>
    </citation>
    <scope>NUCLEOTIDE SEQUENCE [LARGE SCALE GENOMIC DNA]</scope>
    <source>
        <strain>ATCC 204508 / S288c</strain>
    </source>
</reference>
<reference key="4">
    <citation type="journal article" date="2014" name="G3 (Bethesda)">
        <title>The reference genome sequence of Saccharomyces cerevisiae: Then and now.</title>
        <authorList>
            <person name="Engel S.R."/>
            <person name="Dietrich F.S."/>
            <person name="Fisk D.G."/>
            <person name="Binkley G."/>
            <person name="Balakrishnan R."/>
            <person name="Costanzo M.C."/>
            <person name="Dwight S.S."/>
            <person name="Hitz B.C."/>
            <person name="Karra K."/>
            <person name="Nash R.S."/>
            <person name="Weng S."/>
            <person name="Wong E.D."/>
            <person name="Lloyd P."/>
            <person name="Skrzypek M.S."/>
            <person name="Miyasato S.R."/>
            <person name="Simison M."/>
            <person name="Cherry J.M."/>
        </authorList>
    </citation>
    <scope>GENOME REANNOTATION</scope>
    <source>
        <strain>ATCC 204508 / S288c</strain>
    </source>
</reference>
<reference key="5">
    <citation type="journal article" date="1998" name="J. Biol. Chem.">
        <title>MTO1 codes for a mitochondrial protein required for respiration in paromomycin-resistant mutants of Saccharomyces cerevisiae.</title>
        <authorList>
            <person name="Colby G."/>
            <person name="Wu M."/>
            <person name="Tzagoloff A."/>
        </authorList>
    </citation>
    <scope>INTERACTION WITH MTO1</scope>
</reference>
<reference key="6">
    <citation type="journal article" date="2003" name="Nature">
        <title>Global analysis of protein localization in budding yeast.</title>
        <authorList>
            <person name="Huh W.-K."/>
            <person name="Falvo J.V."/>
            <person name="Gerke L.C."/>
            <person name="Carroll A.S."/>
            <person name="Howson R.W."/>
            <person name="Weissman J.S."/>
            <person name="O'Shea E.K."/>
        </authorList>
    </citation>
    <scope>SUBCELLULAR LOCATION [LARGE SCALE ANALYSIS]</scope>
</reference>
<reference key="7">
    <citation type="journal article" date="2003" name="Nature">
        <title>Global analysis of protein expression in yeast.</title>
        <authorList>
            <person name="Ghaemmaghami S."/>
            <person name="Huh W.-K."/>
            <person name="Bower K."/>
            <person name="Howson R.W."/>
            <person name="Belle A."/>
            <person name="Dephoure N."/>
            <person name="O'Shea E.K."/>
            <person name="Weissman J.S."/>
        </authorList>
    </citation>
    <scope>LEVEL OF PROTEIN EXPRESSION [LARGE SCALE ANALYSIS]</scope>
</reference>
<reference key="8">
    <citation type="journal article" date="2005" name="J. Biol. Chem.">
        <title>Mitochondria-specific RNA-modifying enzymes responsible for the biosynthesis of the wobble base in mitochondrial tRNAs. Implications for the molecular pathogenesis of human mitochondrial diseases.</title>
        <authorList>
            <person name="Umeda N."/>
            <person name="Suzuki T."/>
            <person name="Yukawa M."/>
            <person name="Ohya Y."/>
            <person name="Shindo H."/>
            <person name="Watanabe K."/>
            <person name="Suzuki T."/>
        </authorList>
    </citation>
    <scope>FUNCTION</scope>
</reference>
<dbReference type="EMBL" id="X69481">
    <property type="protein sequence ID" value="CAA49238.1"/>
    <property type="molecule type" value="Genomic_DNA"/>
</dbReference>
<dbReference type="EMBL" id="DQ834923">
    <property type="protein sequence ID" value="ABG77646.1"/>
    <property type="molecule type" value="Genomic_DNA"/>
</dbReference>
<dbReference type="EMBL" id="Z49211">
    <property type="protein sequence ID" value="CAA89126.1"/>
    <property type="molecule type" value="Genomic_DNA"/>
</dbReference>
<dbReference type="EMBL" id="BK006946">
    <property type="protein sequence ID" value="DAA09921.1"/>
    <property type="molecule type" value="Genomic_DNA"/>
</dbReference>
<dbReference type="PIR" id="S54025">
    <property type="entry name" value="S54025"/>
</dbReference>
<dbReference type="RefSeq" id="NP_013736.1">
    <property type="nucleotide sequence ID" value="NM_001182519.1"/>
</dbReference>
<dbReference type="SMR" id="P32559"/>
<dbReference type="BioGRID" id="35194">
    <property type="interactions" value="348"/>
</dbReference>
<dbReference type="DIP" id="DIP-5882N"/>
<dbReference type="FunCoup" id="P32559">
    <property type="interactions" value="590"/>
</dbReference>
<dbReference type="IntAct" id="P32559">
    <property type="interactions" value="2"/>
</dbReference>
<dbReference type="MINT" id="P32559"/>
<dbReference type="STRING" id="4932.YMR023C"/>
<dbReference type="PaxDb" id="4932-YMR023C"/>
<dbReference type="PeptideAtlas" id="P32559"/>
<dbReference type="EnsemblFungi" id="YMR023C_mRNA">
    <property type="protein sequence ID" value="YMR023C"/>
    <property type="gene ID" value="YMR023C"/>
</dbReference>
<dbReference type="GeneID" id="855037"/>
<dbReference type="KEGG" id="sce:YMR023C"/>
<dbReference type="AGR" id="SGD:S000004625"/>
<dbReference type="SGD" id="S000004625">
    <property type="gene designation" value="MSS1"/>
</dbReference>
<dbReference type="VEuPathDB" id="FungiDB:YMR023C"/>
<dbReference type="eggNOG" id="KOG1191">
    <property type="taxonomic scope" value="Eukaryota"/>
</dbReference>
<dbReference type="GeneTree" id="ENSGT00390000016851"/>
<dbReference type="HOGENOM" id="CLU_019624_3_1_1"/>
<dbReference type="InParanoid" id="P32559"/>
<dbReference type="OMA" id="EFHCHGG"/>
<dbReference type="OrthoDB" id="188276at2759"/>
<dbReference type="BioCyc" id="MetaCyc:G3O-32728-MONOMER"/>
<dbReference type="BioCyc" id="YEAST:G3O-32728-MONOMER"/>
<dbReference type="BioGRID-ORCS" id="855037">
    <property type="hits" value="0 hits in 10 CRISPR screens"/>
</dbReference>
<dbReference type="PRO" id="PR:P32559"/>
<dbReference type="Proteomes" id="UP000002311">
    <property type="component" value="Chromosome XIII"/>
</dbReference>
<dbReference type="RNAct" id="P32559">
    <property type="molecule type" value="protein"/>
</dbReference>
<dbReference type="GO" id="GO:0005737">
    <property type="term" value="C:cytoplasm"/>
    <property type="evidence" value="ECO:0000318"/>
    <property type="project" value="GO_Central"/>
</dbReference>
<dbReference type="GO" id="GO:0005829">
    <property type="term" value="C:cytosol"/>
    <property type="evidence" value="ECO:0007005"/>
    <property type="project" value="SGD"/>
</dbReference>
<dbReference type="GO" id="GO:0005743">
    <property type="term" value="C:mitochondrial inner membrane"/>
    <property type="evidence" value="ECO:0000314"/>
    <property type="project" value="SGD"/>
</dbReference>
<dbReference type="GO" id="GO:0005739">
    <property type="term" value="C:mitochondrion"/>
    <property type="evidence" value="ECO:0007005"/>
    <property type="project" value="SGD"/>
</dbReference>
<dbReference type="GO" id="GO:0005525">
    <property type="term" value="F:GTP binding"/>
    <property type="evidence" value="ECO:0000250"/>
    <property type="project" value="SGD"/>
</dbReference>
<dbReference type="GO" id="GO:0003924">
    <property type="term" value="F:GTPase activity"/>
    <property type="evidence" value="ECO:0007669"/>
    <property type="project" value="InterPro"/>
</dbReference>
<dbReference type="GO" id="GO:0070899">
    <property type="term" value="P:mitochondrial tRNA wobble uridine modification"/>
    <property type="evidence" value="ECO:0000315"/>
    <property type="project" value="SGD"/>
</dbReference>
<dbReference type="GO" id="GO:0030488">
    <property type="term" value="P:tRNA methylation"/>
    <property type="evidence" value="ECO:0000318"/>
    <property type="project" value="GO_Central"/>
</dbReference>
<dbReference type="GO" id="GO:0002098">
    <property type="term" value="P:tRNA wobble uridine modification"/>
    <property type="evidence" value="ECO:0000318"/>
    <property type="project" value="GO_Central"/>
</dbReference>
<dbReference type="CDD" id="cd04164">
    <property type="entry name" value="trmE"/>
    <property type="match status" value="1"/>
</dbReference>
<dbReference type="CDD" id="cd14858">
    <property type="entry name" value="TrmE_N"/>
    <property type="match status" value="1"/>
</dbReference>
<dbReference type="FunFam" id="3.30.1360.120:FF:000030">
    <property type="entry name" value="GTPase MSS1, mitochondrial"/>
    <property type="match status" value="1"/>
</dbReference>
<dbReference type="FunFam" id="3.40.50.300:FF:001989">
    <property type="entry name" value="GTPase MSS1, mitochondrial"/>
    <property type="match status" value="1"/>
</dbReference>
<dbReference type="Gene3D" id="3.40.50.300">
    <property type="entry name" value="P-loop containing nucleotide triphosphate hydrolases"/>
    <property type="match status" value="1"/>
</dbReference>
<dbReference type="Gene3D" id="3.30.1360.120">
    <property type="entry name" value="Probable tRNA modification gtpase trme, domain 1"/>
    <property type="match status" value="1"/>
</dbReference>
<dbReference type="Gene3D" id="1.20.120.430">
    <property type="entry name" value="tRNA modification GTPase MnmE domain 2"/>
    <property type="match status" value="1"/>
</dbReference>
<dbReference type="HAMAP" id="MF_00379">
    <property type="entry name" value="GTPase_MnmE"/>
    <property type="match status" value="1"/>
</dbReference>
<dbReference type="InterPro" id="IPR031168">
    <property type="entry name" value="G_TrmE"/>
</dbReference>
<dbReference type="InterPro" id="IPR006073">
    <property type="entry name" value="GTP-bd"/>
</dbReference>
<dbReference type="InterPro" id="IPR018948">
    <property type="entry name" value="GTP-bd_TrmE_N"/>
</dbReference>
<dbReference type="InterPro" id="IPR004520">
    <property type="entry name" value="GTPase_MnmE"/>
</dbReference>
<dbReference type="InterPro" id="IPR027368">
    <property type="entry name" value="MnmE_dom2"/>
</dbReference>
<dbReference type="InterPro" id="IPR025867">
    <property type="entry name" value="MnmE_helical"/>
</dbReference>
<dbReference type="InterPro" id="IPR027417">
    <property type="entry name" value="P-loop_NTPase"/>
</dbReference>
<dbReference type="InterPro" id="IPR005225">
    <property type="entry name" value="Small_GTP-bd"/>
</dbReference>
<dbReference type="InterPro" id="IPR027266">
    <property type="entry name" value="TrmE/GcvT_dom1"/>
</dbReference>
<dbReference type="NCBIfam" id="TIGR00450">
    <property type="entry name" value="mnmE_trmE_thdF"/>
    <property type="match status" value="1"/>
</dbReference>
<dbReference type="NCBIfam" id="NF003661">
    <property type="entry name" value="PRK05291.1-3"/>
    <property type="match status" value="1"/>
</dbReference>
<dbReference type="NCBIfam" id="TIGR00231">
    <property type="entry name" value="small_GTP"/>
    <property type="match status" value="1"/>
</dbReference>
<dbReference type="PANTHER" id="PTHR42714">
    <property type="entry name" value="TRNA MODIFICATION GTPASE GTPBP3"/>
    <property type="match status" value="1"/>
</dbReference>
<dbReference type="PANTHER" id="PTHR42714:SF2">
    <property type="entry name" value="TRNA MODIFICATION GTPASE GTPBP3, MITOCHONDRIAL"/>
    <property type="match status" value="1"/>
</dbReference>
<dbReference type="Pfam" id="PF01926">
    <property type="entry name" value="MMR_HSR1"/>
    <property type="match status" value="1"/>
</dbReference>
<dbReference type="Pfam" id="PF12631">
    <property type="entry name" value="MnmE_helical"/>
    <property type="match status" value="1"/>
</dbReference>
<dbReference type="Pfam" id="PF10396">
    <property type="entry name" value="TrmE_N"/>
    <property type="match status" value="1"/>
</dbReference>
<dbReference type="PRINTS" id="PR00449">
    <property type="entry name" value="RASTRNSFRMNG"/>
</dbReference>
<dbReference type="SUPFAM" id="SSF52540">
    <property type="entry name" value="P-loop containing nucleoside triphosphate hydrolases"/>
    <property type="match status" value="1"/>
</dbReference>
<dbReference type="PROSITE" id="PS51709">
    <property type="entry name" value="G_TRME"/>
    <property type="match status" value="1"/>
</dbReference>
<proteinExistence type="evidence at protein level"/>
<organism>
    <name type="scientific">Saccharomyces cerevisiae (strain ATCC 204508 / S288c)</name>
    <name type="common">Baker's yeast</name>
    <dbReference type="NCBI Taxonomy" id="559292"/>
    <lineage>
        <taxon>Eukaryota</taxon>
        <taxon>Fungi</taxon>
        <taxon>Dikarya</taxon>
        <taxon>Ascomycota</taxon>
        <taxon>Saccharomycotina</taxon>
        <taxon>Saccharomycetes</taxon>
        <taxon>Saccharomycetales</taxon>
        <taxon>Saccharomycetaceae</taxon>
        <taxon>Saccharomyces</taxon>
    </lineage>
</organism>